<dbReference type="EMBL" id="CP000143">
    <property type="protein sequence ID" value="ABA78950.1"/>
    <property type="molecule type" value="Genomic_DNA"/>
</dbReference>
<dbReference type="RefSeq" id="WP_002719944.1">
    <property type="nucleotide sequence ID" value="NZ_CP030271.1"/>
</dbReference>
<dbReference type="RefSeq" id="YP_352851.1">
    <property type="nucleotide sequence ID" value="NC_007493.2"/>
</dbReference>
<dbReference type="SMR" id="Q3J2N4"/>
<dbReference type="STRING" id="272943.RSP_2860"/>
<dbReference type="EnsemblBacteria" id="ABA78950">
    <property type="protein sequence ID" value="ABA78950"/>
    <property type="gene ID" value="RSP_2860"/>
</dbReference>
<dbReference type="GeneID" id="67446527"/>
<dbReference type="KEGG" id="rsp:RSP_2860"/>
<dbReference type="PATRIC" id="fig|272943.9.peg.1716"/>
<dbReference type="eggNOG" id="COG0052">
    <property type="taxonomic scope" value="Bacteria"/>
</dbReference>
<dbReference type="OrthoDB" id="9808036at2"/>
<dbReference type="PhylomeDB" id="Q3J2N4"/>
<dbReference type="Proteomes" id="UP000002703">
    <property type="component" value="Chromosome 1"/>
</dbReference>
<dbReference type="GO" id="GO:0022627">
    <property type="term" value="C:cytosolic small ribosomal subunit"/>
    <property type="evidence" value="ECO:0007669"/>
    <property type="project" value="TreeGrafter"/>
</dbReference>
<dbReference type="GO" id="GO:0003735">
    <property type="term" value="F:structural constituent of ribosome"/>
    <property type="evidence" value="ECO:0007669"/>
    <property type="project" value="InterPro"/>
</dbReference>
<dbReference type="GO" id="GO:0006412">
    <property type="term" value="P:translation"/>
    <property type="evidence" value="ECO:0007669"/>
    <property type="project" value="UniProtKB-UniRule"/>
</dbReference>
<dbReference type="CDD" id="cd01425">
    <property type="entry name" value="RPS2"/>
    <property type="match status" value="1"/>
</dbReference>
<dbReference type="FunFam" id="1.10.287.610:FF:000001">
    <property type="entry name" value="30S ribosomal protein S2"/>
    <property type="match status" value="1"/>
</dbReference>
<dbReference type="Gene3D" id="3.40.50.10490">
    <property type="entry name" value="Glucose-6-phosphate isomerase like protein, domain 1"/>
    <property type="match status" value="1"/>
</dbReference>
<dbReference type="Gene3D" id="1.10.287.610">
    <property type="entry name" value="Helix hairpin bin"/>
    <property type="match status" value="1"/>
</dbReference>
<dbReference type="HAMAP" id="MF_00291_B">
    <property type="entry name" value="Ribosomal_uS2_B"/>
    <property type="match status" value="1"/>
</dbReference>
<dbReference type="InterPro" id="IPR001865">
    <property type="entry name" value="Ribosomal_uS2"/>
</dbReference>
<dbReference type="InterPro" id="IPR005706">
    <property type="entry name" value="Ribosomal_uS2_bac/mit/plastid"/>
</dbReference>
<dbReference type="InterPro" id="IPR018130">
    <property type="entry name" value="Ribosomal_uS2_CS"/>
</dbReference>
<dbReference type="InterPro" id="IPR023591">
    <property type="entry name" value="Ribosomal_uS2_flav_dom_sf"/>
</dbReference>
<dbReference type="NCBIfam" id="TIGR01011">
    <property type="entry name" value="rpsB_bact"/>
    <property type="match status" value="1"/>
</dbReference>
<dbReference type="PANTHER" id="PTHR12534">
    <property type="entry name" value="30S RIBOSOMAL PROTEIN S2 PROKARYOTIC AND ORGANELLAR"/>
    <property type="match status" value="1"/>
</dbReference>
<dbReference type="PANTHER" id="PTHR12534:SF0">
    <property type="entry name" value="SMALL RIBOSOMAL SUBUNIT PROTEIN US2M"/>
    <property type="match status" value="1"/>
</dbReference>
<dbReference type="Pfam" id="PF00318">
    <property type="entry name" value="Ribosomal_S2"/>
    <property type="match status" value="1"/>
</dbReference>
<dbReference type="PRINTS" id="PR00395">
    <property type="entry name" value="RIBOSOMALS2"/>
</dbReference>
<dbReference type="SUPFAM" id="SSF52313">
    <property type="entry name" value="Ribosomal protein S2"/>
    <property type="match status" value="1"/>
</dbReference>
<dbReference type="PROSITE" id="PS00963">
    <property type="entry name" value="RIBOSOMAL_S2_2"/>
    <property type="match status" value="1"/>
</dbReference>
<feature type="chain" id="PRO_0000352028" description="Small ribosomal subunit protein uS2">
    <location>
        <begin position="1"/>
        <end position="253"/>
    </location>
</feature>
<comment type="similarity">
    <text evidence="1">Belongs to the universal ribosomal protein uS2 family.</text>
</comment>
<evidence type="ECO:0000255" key="1">
    <source>
        <dbReference type="HAMAP-Rule" id="MF_00291"/>
    </source>
</evidence>
<evidence type="ECO:0000305" key="2"/>
<name>RS2_CERS4</name>
<proteinExistence type="inferred from homology"/>
<gene>
    <name evidence="1" type="primary">rpsB</name>
    <name type="ordered locus">RHOS4_13820</name>
    <name type="ORF">RSP_2860</name>
</gene>
<accession>Q3J2N4</accession>
<protein>
    <recommendedName>
        <fullName evidence="1">Small ribosomal subunit protein uS2</fullName>
    </recommendedName>
    <alternativeName>
        <fullName evidence="2">30S ribosomal protein S2</fullName>
    </alternativeName>
</protein>
<sequence length="253" mass="27550">MDMALPEFSMRQLLEAGVHYGHQTARWNPKMAEFIYGDRNGIHIVDLTQTVPMLDQALKVVRDTVAKGGRILFVGTKRQAQKPIAEAAEKCAQHYMNHRWLGGTLTNWKTVSQSIQRLKQLDEVLATGAEGLTKKERLNMEREQQKLQASLGGIREMGGTPDLLFIIDVGKEDLAIAEAQKLGIPVVAVVDTNNSPKGVDYVIPGNDDAARAIALYCDLVSRAALDGMSAQMGAAGIDLGALDVAPEEETLEA</sequence>
<keyword id="KW-1185">Reference proteome</keyword>
<keyword id="KW-0687">Ribonucleoprotein</keyword>
<keyword id="KW-0689">Ribosomal protein</keyword>
<reference key="1">
    <citation type="submission" date="2005-09" db="EMBL/GenBank/DDBJ databases">
        <title>Complete sequence of chromosome 1 of Rhodobacter sphaeroides 2.4.1.</title>
        <authorList>
            <person name="Copeland A."/>
            <person name="Lucas S."/>
            <person name="Lapidus A."/>
            <person name="Barry K."/>
            <person name="Detter J.C."/>
            <person name="Glavina T."/>
            <person name="Hammon N."/>
            <person name="Israni S."/>
            <person name="Pitluck S."/>
            <person name="Richardson P."/>
            <person name="Mackenzie C."/>
            <person name="Choudhary M."/>
            <person name="Larimer F."/>
            <person name="Hauser L.J."/>
            <person name="Land M."/>
            <person name="Donohue T.J."/>
            <person name="Kaplan S."/>
        </authorList>
    </citation>
    <scope>NUCLEOTIDE SEQUENCE [LARGE SCALE GENOMIC DNA]</scope>
    <source>
        <strain>ATCC 17023 / DSM 158 / JCM 6121 / CCUG 31486 / LMG 2827 / NBRC 12203 / NCIMB 8253 / ATH 2.4.1.</strain>
    </source>
</reference>
<organism>
    <name type="scientific">Cereibacter sphaeroides (strain ATCC 17023 / DSM 158 / JCM 6121 / CCUG 31486 / LMG 2827 / NBRC 12203 / NCIMB 8253 / ATH 2.4.1.)</name>
    <name type="common">Rhodobacter sphaeroides</name>
    <dbReference type="NCBI Taxonomy" id="272943"/>
    <lineage>
        <taxon>Bacteria</taxon>
        <taxon>Pseudomonadati</taxon>
        <taxon>Pseudomonadota</taxon>
        <taxon>Alphaproteobacteria</taxon>
        <taxon>Rhodobacterales</taxon>
        <taxon>Paracoccaceae</taxon>
        <taxon>Cereibacter</taxon>
    </lineage>
</organism>